<evidence type="ECO:0000250" key="1"/>
<evidence type="ECO:0000255" key="2">
    <source>
        <dbReference type="HAMAP-Rule" id="MF_00118"/>
    </source>
</evidence>
<organism>
    <name type="scientific">Rhodopseudomonas palustris (strain ATCC BAA-98 / CGA009)</name>
    <dbReference type="NCBI Taxonomy" id="258594"/>
    <lineage>
        <taxon>Bacteria</taxon>
        <taxon>Pseudomonadati</taxon>
        <taxon>Pseudomonadota</taxon>
        <taxon>Alphaproteobacteria</taxon>
        <taxon>Hyphomicrobiales</taxon>
        <taxon>Nitrobacteraceae</taxon>
        <taxon>Rhodopseudomonas</taxon>
    </lineage>
</organism>
<gene>
    <name evidence="2" type="primary">tuf1</name>
    <name type="synonym">tufA</name>
    <name type="ordered locus">RPA3252</name>
</gene>
<gene>
    <name evidence="2" type="primary">tuf2</name>
    <name type="synonym">tuf</name>
    <name type="ordered locus">RPA3283</name>
</gene>
<feature type="chain" id="PRO_0000337494" description="Elongation factor Tu">
    <location>
        <begin position="1"/>
        <end position="396"/>
    </location>
</feature>
<feature type="domain" description="tr-type G">
    <location>
        <begin position="10"/>
        <end position="206"/>
    </location>
</feature>
<feature type="region of interest" description="G1" evidence="1">
    <location>
        <begin position="19"/>
        <end position="26"/>
    </location>
</feature>
<feature type="region of interest" description="G2" evidence="1">
    <location>
        <begin position="60"/>
        <end position="64"/>
    </location>
</feature>
<feature type="region of interest" description="G3" evidence="1">
    <location>
        <begin position="81"/>
        <end position="84"/>
    </location>
</feature>
<feature type="region of interest" description="G4" evidence="1">
    <location>
        <begin position="136"/>
        <end position="139"/>
    </location>
</feature>
<feature type="region of interest" description="G5" evidence="1">
    <location>
        <begin position="174"/>
        <end position="176"/>
    </location>
</feature>
<feature type="binding site" evidence="2">
    <location>
        <begin position="19"/>
        <end position="26"/>
    </location>
    <ligand>
        <name>GTP</name>
        <dbReference type="ChEBI" id="CHEBI:37565"/>
    </ligand>
</feature>
<feature type="binding site" evidence="2">
    <location>
        <position position="26"/>
    </location>
    <ligand>
        <name>Mg(2+)</name>
        <dbReference type="ChEBI" id="CHEBI:18420"/>
    </ligand>
</feature>
<feature type="binding site" evidence="2">
    <location>
        <begin position="81"/>
        <end position="85"/>
    </location>
    <ligand>
        <name>GTP</name>
        <dbReference type="ChEBI" id="CHEBI:37565"/>
    </ligand>
</feature>
<feature type="binding site" evidence="2">
    <location>
        <begin position="136"/>
        <end position="139"/>
    </location>
    <ligand>
        <name>GTP</name>
        <dbReference type="ChEBI" id="CHEBI:37565"/>
    </ligand>
</feature>
<proteinExistence type="inferred from homology"/>
<sequence length="396" mass="43337">MAKAKFERTKPHCNIGTIGHVDHGKTSLTAAITKVLAETGGATFTAYDQIDKAPEEKARGITISTAHVEYETQNRHYAHVDCPGHADYVKNMITGAAQMDGAILVVSAADGPMPQTREHILLARQVGVPALVVFLNKCDMVDDPELLELVEMEVRELLSKYDFPGDDIPIVKGSALAALENSDAKLGHDAILELMRQVDAYIPQPERPIDQPFLMPVEDVFSISGRGTVVTGRVERGILKVGDEIEIVGIRDTQKTTCTGVEMFRKLLDQGQAGDNIGALLRGTKREDVERGQVLCKPGSVKPHTKFKAEAYILTKEEGGRHTPFFTNYRPQFYFRTTDVTGVVHLPEGTEMVMPGDNIAMEVHLIVPIAMEEKLRFAIREGGRTVGAGVVAAIIE</sequence>
<comment type="function">
    <text evidence="2">GTP hydrolase that promotes the GTP-dependent binding of aminoacyl-tRNA to the A-site of ribosomes during protein biosynthesis.</text>
</comment>
<comment type="catalytic activity">
    <reaction evidence="2">
        <text>GTP + H2O = GDP + phosphate + H(+)</text>
        <dbReference type="Rhea" id="RHEA:19669"/>
        <dbReference type="ChEBI" id="CHEBI:15377"/>
        <dbReference type="ChEBI" id="CHEBI:15378"/>
        <dbReference type="ChEBI" id="CHEBI:37565"/>
        <dbReference type="ChEBI" id="CHEBI:43474"/>
        <dbReference type="ChEBI" id="CHEBI:58189"/>
        <dbReference type="EC" id="3.6.5.3"/>
    </reaction>
    <physiologicalReaction direction="left-to-right" evidence="2">
        <dbReference type="Rhea" id="RHEA:19670"/>
    </physiologicalReaction>
</comment>
<comment type="subunit">
    <text evidence="2">Monomer.</text>
</comment>
<comment type="subcellular location">
    <subcellularLocation>
        <location evidence="2">Cytoplasm</location>
    </subcellularLocation>
</comment>
<comment type="similarity">
    <text evidence="2">Belongs to the TRAFAC class translation factor GTPase superfamily. Classic translation factor GTPase family. EF-Tu/EF-1A subfamily.</text>
</comment>
<protein>
    <recommendedName>
        <fullName evidence="2">Elongation factor Tu</fullName>
        <shortName evidence="2">EF-Tu</shortName>
        <ecNumber evidence="2">3.6.5.3</ecNumber>
    </recommendedName>
</protein>
<name>EFTU_RHOPA</name>
<accession>Q6N4Q4</accession>
<dbReference type="EC" id="3.6.5.3" evidence="2"/>
<dbReference type="EMBL" id="BX572603">
    <property type="protein sequence ID" value="CAE28693.1"/>
    <property type="molecule type" value="Genomic_DNA"/>
</dbReference>
<dbReference type="EMBL" id="BX572603">
    <property type="protein sequence ID" value="CAE28724.1"/>
    <property type="molecule type" value="Genomic_DNA"/>
</dbReference>
<dbReference type="RefSeq" id="WP_011158796.1">
    <property type="nucleotide sequence ID" value="NZ_CP116810.1"/>
</dbReference>
<dbReference type="SMR" id="Q6N4Q4"/>
<dbReference type="STRING" id="258594.RPA3252"/>
<dbReference type="GeneID" id="66894370"/>
<dbReference type="eggNOG" id="COG0050">
    <property type="taxonomic scope" value="Bacteria"/>
</dbReference>
<dbReference type="HOGENOM" id="CLU_007265_0_1_5"/>
<dbReference type="PhylomeDB" id="Q6N4Q4"/>
<dbReference type="GO" id="GO:0005829">
    <property type="term" value="C:cytosol"/>
    <property type="evidence" value="ECO:0007669"/>
    <property type="project" value="TreeGrafter"/>
</dbReference>
<dbReference type="GO" id="GO:0005525">
    <property type="term" value="F:GTP binding"/>
    <property type="evidence" value="ECO:0007669"/>
    <property type="project" value="UniProtKB-UniRule"/>
</dbReference>
<dbReference type="GO" id="GO:0003924">
    <property type="term" value="F:GTPase activity"/>
    <property type="evidence" value="ECO:0007669"/>
    <property type="project" value="InterPro"/>
</dbReference>
<dbReference type="GO" id="GO:0097216">
    <property type="term" value="F:guanosine tetraphosphate binding"/>
    <property type="evidence" value="ECO:0007669"/>
    <property type="project" value="UniProtKB-ARBA"/>
</dbReference>
<dbReference type="GO" id="GO:0003746">
    <property type="term" value="F:translation elongation factor activity"/>
    <property type="evidence" value="ECO:0007669"/>
    <property type="project" value="UniProtKB-UniRule"/>
</dbReference>
<dbReference type="CDD" id="cd01884">
    <property type="entry name" value="EF_Tu"/>
    <property type="match status" value="1"/>
</dbReference>
<dbReference type="CDD" id="cd03697">
    <property type="entry name" value="EFTU_II"/>
    <property type="match status" value="1"/>
</dbReference>
<dbReference type="CDD" id="cd03707">
    <property type="entry name" value="EFTU_III"/>
    <property type="match status" value="1"/>
</dbReference>
<dbReference type="FunFam" id="2.40.30.10:FF:000001">
    <property type="entry name" value="Elongation factor Tu"/>
    <property type="match status" value="1"/>
</dbReference>
<dbReference type="FunFam" id="3.40.50.300:FF:000003">
    <property type="entry name" value="Elongation factor Tu"/>
    <property type="match status" value="1"/>
</dbReference>
<dbReference type="Gene3D" id="3.40.50.300">
    <property type="entry name" value="P-loop containing nucleotide triphosphate hydrolases"/>
    <property type="match status" value="1"/>
</dbReference>
<dbReference type="Gene3D" id="2.40.30.10">
    <property type="entry name" value="Translation factors"/>
    <property type="match status" value="2"/>
</dbReference>
<dbReference type="HAMAP" id="MF_00118_B">
    <property type="entry name" value="EF_Tu_B"/>
    <property type="match status" value="1"/>
</dbReference>
<dbReference type="InterPro" id="IPR041709">
    <property type="entry name" value="EF-Tu_GTP-bd"/>
</dbReference>
<dbReference type="InterPro" id="IPR050055">
    <property type="entry name" value="EF-Tu_GTPase"/>
</dbReference>
<dbReference type="InterPro" id="IPR004161">
    <property type="entry name" value="EFTu-like_2"/>
</dbReference>
<dbReference type="InterPro" id="IPR033720">
    <property type="entry name" value="EFTU_2"/>
</dbReference>
<dbReference type="InterPro" id="IPR031157">
    <property type="entry name" value="G_TR_CS"/>
</dbReference>
<dbReference type="InterPro" id="IPR027417">
    <property type="entry name" value="P-loop_NTPase"/>
</dbReference>
<dbReference type="InterPro" id="IPR005225">
    <property type="entry name" value="Small_GTP-bd"/>
</dbReference>
<dbReference type="InterPro" id="IPR000795">
    <property type="entry name" value="T_Tr_GTP-bd_dom"/>
</dbReference>
<dbReference type="InterPro" id="IPR009000">
    <property type="entry name" value="Transl_B-barrel_sf"/>
</dbReference>
<dbReference type="InterPro" id="IPR009001">
    <property type="entry name" value="Transl_elong_EF1A/Init_IF2_C"/>
</dbReference>
<dbReference type="InterPro" id="IPR004541">
    <property type="entry name" value="Transl_elong_EFTu/EF1A_bac/org"/>
</dbReference>
<dbReference type="InterPro" id="IPR004160">
    <property type="entry name" value="Transl_elong_EFTu/EF1A_C"/>
</dbReference>
<dbReference type="NCBIfam" id="TIGR00485">
    <property type="entry name" value="EF-Tu"/>
    <property type="match status" value="1"/>
</dbReference>
<dbReference type="NCBIfam" id="NF000766">
    <property type="entry name" value="PRK00049.1"/>
    <property type="match status" value="1"/>
</dbReference>
<dbReference type="NCBIfam" id="NF009372">
    <property type="entry name" value="PRK12735.1"/>
    <property type="match status" value="1"/>
</dbReference>
<dbReference type="NCBIfam" id="NF009373">
    <property type="entry name" value="PRK12736.1"/>
    <property type="match status" value="1"/>
</dbReference>
<dbReference type="NCBIfam" id="TIGR00231">
    <property type="entry name" value="small_GTP"/>
    <property type="match status" value="1"/>
</dbReference>
<dbReference type="PANTHER" id="PTHR43721:SF22">
    <property type="entry name" value="ELONGATION FACTOR TU, MITOCHONDRIAL"/>
    <property type="match status" value="1"/>
</dbReference>
<dbReference type="PANTHER" id="PTHR43721">
    <property type="entry name" value="ELONGATION FACTOR TU-RELATED"/>
    <property type="match status" value="1"/>
</dbReference>
<dbReference type="Pfam" id="PF00009">
    <property type="entry name" value="GTP_EFTU"/>
    <property type="match status" value="1"/>
</dbReference>
<dbReference type="Pfam" id="PF03144">
    <property type="entry name" value="GTP_EFTU_D2"/>
    <property type="match status" value="1"/>
</dbReference>
<dbReference type="Pfam" id="PF03143">
    <property type="entry name" value="GTP_EFTU_D3"/>
    <property type="match status" value="1"/>
</dbReference>
<dbReference type="PRINTS" id="PR00315">
    <property type="entry name" value="ELONGATNFCT"/>
</dbReference>
<dbReference type="SUPFAM" id="SSF50465">
    <property type="entry name" value="EF-Tu/eEF-1alpha/eIF2-gamma C-terminal domain"/>
    <property type="match status" value="1"/>
</dbReference>
<dbReference type="SUPFAM" id="SSF52540">
    <property type="entry name" value="P-loop containing nucleoside triphosphate hydrolases"/>
    <property type="match status" value="1"/>
</dbReference>
<dbReference type="SUPFAM" id="SSF50447">
    <property type="entry name" value="Translation proteins"/>
    <property type="match status" value="1"/>
</dbReference>
<dbReference type="PROSITE" id="PS00301">
    <property type="entry name" value="G_TR_1"/>
    <property type="match status" value="1"/>
</dbReference>
<dbReference type="PROSITE" id="PS51722">
    <property type="entry name" value="G_TR_2"/>
    <property type="match status" value="1"/>
</dbReference>
<keyword id="KW-0963">Cytoplasm</keyword>
<keyword id="KW-0251">Elongation factor</keyword>
<keyword id="KW-0342">GTP-binding</keyword>
<keyword id="KW-0378">Hydrolase</keyword>
<keyword id="KW-0460">Magnesium</keyword>
<keyword id="KW-0479">Metal-binding</keyword>
<keyword id="KW-0547">Nucleotide-binding</keyword>
<keyword id="KW-0648">Protein biosynthesis</keyword>
<reference key="1">
    <citation type="journal article" date="2004" name="Nat. Biotechnol.">
        <title>Complete genome sequence of the metabolically versatile photosynthetic bacterium Rhodopseudomonas palustris.</title>
        <authorList>
            <person name="Larimer F.W."/>
            <person name="Chain P."/>
            <person name="Hauser L."/>
            <person name="Lamerdin J.E."/>
            <person name="Malfatti S."/>
            <person name="Do L."/>
            <person name="Land M.L."/>
            <person name="Pelletier D.A."/>
            <person name="Beatty J.T."/>
            <person name="Lang A.S."/>
            <person name="Tabita F.R."/>
            <person name="Gibson J.L."/>
            <person name="Hanson T.E."/>
            <person name="Bobst C."/>
            <person name="Torres y Torres J.L."/>
            <person name="Peres C."/>
            <person name="Harrison F.H."/>
            <person name="Gibson J."/>
            <person name="Harwood C.S."/>
        </authorList>
    </citation>
    <scope>NUCLEOTIDE SEQUENCE [LARGE SCALE GENOMIC DNA]</scope>
    <source>
        <strain>ATCC BAA-98 / CGA009</strain>
    </source>
</reference>